<gene>
    <name type="ordered locus">YPR074W-A</name>
</gene>
<accession>P0C5R6</accession>
<organism>
    <name type="scientific">Saccharomyces cerevisiae (strain ATCC 204508 / S288c)</name>
    <name type="common">Baker's yeast</name>
    <dbReference type="NCBI Taxonomy" id="559292"/>
    <lineage>
        <taxon>Eukaryota</taxon>
        <taxon>Fungi</taxon>
        <taxon>Dikarya</taxon>
        <taxon>Ascomycota</taxon>
        <taxon>Saccharomycotina</taxon>
        <taxon>Saccharomycetes</taxon>
        <taxon>Saccharomycetales</taxon>
        <taxon>Saccharomycetaceae</taxon>
        <taxon>Saccharomyces</taxon>
    </lineage>
</organism>
<sequence>MYVTKKIGKEFIYESCLRSYLLGFPKKIFHLSNFSRDCERNGKRRRHFSERRLENK</sequence>
<name>YP074_YEAST</name>
<proteinExistence type="uncertain"/>
<evidence type="ECO:0000305" key="1">
    <source>
    </source>
</evidence>
<protein>
    <recommendedName>
        <fullName>Putative uncharacterized protein YPR074W-A</fullName>
    </recommendedName>
</protein>
<dbReference type="EMBL" id="U51033">
    <property type="status" value="NOT_ANNOTATED_CDS"/>
    <property type="molecule type" value="Genomic_DNA"/>
</dbReference>
<dbReference type="EMBL" id="Z49219">
    <property type="status" value="NOT_ANNOTATED_CDS"/>
    <property type="molecule type" value="Genomic_DNA"/>
</dbReference>
<dbReference type="EMBL" id="Z71255">
    <property type="status" value="NOT_ANNOTATED_CDS"/>
    <property type="molecule type" value="Genomic_DNA"/>
</dbReference>
<dbReference type="STRING" id="4932.YPR074W-A"/>
<dbReference type="PaxDb" id="4932-YPR074W-A"/>
<dbReference type="EnsemblFungi" id="YPR074W-A_mRNA">
    <property type="protein sequence ID" value="YPR074W-A"/>
    <property type="gene ID" value="YPR074W-A"/>
</dbReference>
<dbReference type="AGR" id="SGD:S000007631"/>
<dbReference type="SGD" id="S000007631">
    <property type="gene designation" value="YPR074W-A"/>
</dbReference>
<dbReference type="HOGENOM" id="CLU_3015968_0_0_1"/>
<comment type="caution">
    <text evidence="1">Product of a dubious gene prediction unlikely to encode a functional protein. Because of that it is not part of the S.cerevisiae S288c complete/reference proteome set.</text>
</comment>
<reference key="1">
    <citation type="journal article" date="1997" name="Nature">
        <title>The nucleotide sequence of Saccharomyces cerevisiae chromosome XVI.</title>
        <authorList>
            <person name="Bussey H."/>
            <person name="Storms R.K."/>
            <person name="Ahmed A."/>
            <person name="Albermann K."/>
            <person name="Allen E."/>
            <person name="Ansorge W."/>
            <person name="Araujo R."/>
            <person name="Aparicio A."/>
            <person name="Barrell B.G."/>
            <person name="Badcock K."/>
            <person name="Benes V."/>
            <person name="Botstein D."/>
            <person name="Bowman S."/>
            <person name="Brueckner M."/>
            <person name="Carpenter J."/>
            <person name="Cherry J.M."/>
            <person name="Chung E."/>
            <person name="Churcher C.M."/>
            <person name="Coster F."/>
            <person name="Davis K."/>
            <person name="Davis R.W."/>
            <person name="Dietrich F.S."/>
            <person name="Delius H."/>
            <person name="DiPaolo T."/>
            <person name="Dubois E."/>
            <person name="Duesterhoeft A."/>
            <person name="Duncan M."/>
            <person name="Floeth M."/>
            <person name="Fortin N."/>
            <person name="Friesen J.D."/>
            <person name="Fritz C."/>
            <person name="Goffeau A."/>
            <person name="Hall J."/>
            <person name="Hebling U."/>
            <person name="Heumann K."/>
            <person name="Hilbert H."/>
            <person name="Hillier L.W."/>
            <person name="Hunicke-Smith S."/>
            <person name="Hyman R.W."/>
            <person name="Johnston M."/>
            <person name="Kalman S."/>
            <person name="Kleine K."/>
            <person name="Komp C."/>
            <person name="Kurdi O."/>
            <person name="Lashkari D."/>
            <person name="Lew H."/>
            <person name="Lin A."/>
            <person name="Lin D."/>
            <person name="Louis E.J."/>
            <person name="Marathe R."/>
            <person name="Messenguy F."/>
            <person name="Mewes H.-W."/>
            <person name="Mirtipati S."/>
            <person name="Moestl D."/>
            <person name="Mueller-Auer S."/>
            <person name="Namath A."/>
            <person name="Nentwich U."/>
            <person name="Oefner P."/>
            <person name="Pearson D."/>
            <person name="Petel F.X."/>
            <person name="Pohl T.M."/>
            <person name="Purnelle B."/>
            <person name="Rajandream M.A."/>
            <person name="Rechmann S."/>
            <person name="Rieger M."/>
            <person name="Riles L."/>
            <person name="Roberts D."/>
            <person name="Schaefer M."/>
            <person name="Scharfe M."/>
            <person name="Scherens B."/>
            <person name="Schramm S."/>
            <person name="Schroeder M."/>
            <person name="Sdicu A.-M."/>
            <person name="Tettelin H."/>
            <person name="Urrestarazu L.A."/>
            <person name="Ushinsky S."/>
            <person name="Vierendeels F."/>
            <person name="Vissers S."/>
            <person name="Voss H."/>
            <person name="Walsh S.V."/>
            <person name="Wambutt R."/>
            <person name="Wang Y."/>
            <person name="Wedler E."/>
            <person name="Wedler H."/>
            <person name="Winnett E."/>
            <person name="Zhong W.-W."/>
            <person name="Zollner A."/>
            <person name="Vo D.H."/>
            <person name="Hani J."/>
        </authorList>
    </citation>
    <scope>NUCLEOTIDE SEQUENCE [LARGE SCALE GENOMIC DNA]</scope>
    <source>
        <strain>ATCC 204508 / S288c</strain>
    </source>
</reference>
<reference key="2">
    <citation type="journal article" date="2014" name="G3 (Bethesda)">
        <title>The reference genome sequence of Saccharomyces cerevisiae: Then and now.</title>
        <authorList>
            <person name="Engel S.R."/>
            <person name="Dietrich F.S."/>
            <person name="Fisk D.G."/>
            <person name="Binkley G."/>
            <person name="Balakrishnan R."/>
            <person name="Costanzo M.C."/>
            <person name="Dwight S.S."/>
            <person name="Hitz B.C."/>
            <person name="Karra K."/>
            <person name="Nash R.S."/>
            <person name="Weng S."/>
            <person name="Wong E.D."/>
            <person name="Lloyd P."/>
            <person name="Skrzypek M.S."/>
            <person name="Miyasato S.R."/>
            <person name="Simison M."/>
            <person name="Cherry J.M."/>
        </authorList>
    </citation>
    <scope>GENOME REANNOTATION</scope>
    <source>
        <strain>ATCC 204508 / S288c</strain>
    </source>
</reference>
<reference key="3">
    <citation type="journal article" date="2000" name="FEBS Lett.">
        <title>Genomic exploration of the hemiascomycetous yeasts: 4. The genome of Saccharomyces cerevisiae revisited.</title>
        <authorList>
            <person name="Blandin G."/>
            <person name="Durrens P."/>
            <person name="Tekaia F."/>
            <person name="Aigle M."/>
            <person name="Bolotin-Fukuhara M."/>
            <person name="Bon E."/>
            <person name="Casaregola S."/>
            <person name="de Montigny J."/>
            <person name="Gaillardin C."/>
            <person name="Lepingle A."/>
            <person name="Llorente B."/>
            <person name="Malpertuy A."/>
            <person name="Neuveglise C."/>
            <person name="Ozier-Kalogeropoulos O."/>
            <person name="Perrin A."/>
            <person name="Potier S."/>
            <person name="Souciet J.-L."/>
            <person name="Talla E."/>
            <person name="Toffano-Nioche C."/>
            <person name="Wesolowski-Louvel M."/>
            <person name="Marck C."/>
            <person name="Dujon B."/>
        </authorList>
    </citation>
    <scope>GENOME REANNOTATION</scope>
</reference>
<feature type="chain" id="PRO_0000309064" description="Putative uncharacterized protein YPR074W-A">
    <location>
        <begin position="1"/>
        <end position="56"/>
    </location>
</feature>